<organism>
    <name type="scientific">Pseudomonas putida</name>
    <name type="common">Arthrobacter siderocapsulatus</name>
    <dbReference type="NCBI Taxonomy" id="303"/>
    <lineage>
        <taxon>Bacteria</taxon>
        <taxon>Pseudomonadati</taxon>
        <taxon>Pseudomonadota</taxon>
        <taxon>Gammaproteobacteria</taxon>
        <taxon>Pseudomonadales</taxon>
        <taxon>Pseudomonadaceae</taxon>
        <taxon>Pseudomonas</taxon>
    </lineage>
</organism>
<protein>
    <recommendedName>
        <fullName>Methylxanthine N1-demethylase NdmA</fullName>
        <ecNumber>1.14.13.178</ecNumber>
    </recommendedName>
    <alternativeName>
        <fullName>1-methylxanthine demethylase</fullName>
    </alternativeName>
</protein>
<keyword id="KW-0001">2Fe-2S</keyword>
<keyword id="KW-0002">3D-structure</keyword>
<keyword id="KW-0017">Alkaloid metabolism</keyword>
<keyword id="KW-0903">Direct protein sequencing</keyword>
<keyword id="KW-0408">Iron</keyword>
<keyword id="KW-0411">Iron-sulfur</keyword>
<keyword id="KW-0479">Metal-binding</keyword>
<keyword id="KW-0520">NAD</keyword>
<keyword id="KW-0560">Oxidoreductase</keyword>
<name>NDMA_PSEPU</name>
<accession>H9N289</accession>
<gene>
    <name type="primary">ndmA</name>
</gene>
<proteinExistence type="evidence at protein level"/>
<evidence type="ECO:0000255" key="1">
    <source>
        <dbReference type="PROSITE-ProRule" id="PRU00628"/>
    </source>
</evidence>
<evidence type="ECO:0000269" key="2">
    <source>
    </source>
</evidence>
<evidence type="ECO:0000269" key="3">
    <source>
    </source>
</evidence>
<evidence type="ECO:0007829" key="4">
    <source>
        <dbReference type="PDB" id="6ICN"/>
    </source>
</evidence>
<evidence type="ECO:0007829" key="5">
    <source>
        <dbReference type="PDB" id="6ICO"/>
    </source>
</evidence>
<evidence type="ECO:0007829" key="6">
    <source>
        <dbReference type="PDB" id="6ICQ"/>
    </source>
</evidence>
<reference key="1">
    <citation type="journal article" date="2012" name="J. Bacteriol.">
        <title>Novel, highly specific N-demethylases enable bacteria to live on caffeine and related purine alkaloids.</title>
        <authorList>
            <person name="Summers R.M."/>
            <person name="Louie T.M."/>
            <person name="Yu C.L."/>
            <person name="Gakhar L."/>
            <person name="Louie K.C."/>
            <person name="Subramanian M."/>
        </authorList>
    </citation>
    <scope>NUCLEOTIDE SEQUENCE [GENOMIC DNA]</scope>
    <scope>FUNCTION</scope>
    <scope>CATALYTIC ACTIVITY</scope>
    <scope>BIOPHYSICOCHEMICAL PROPERTIES</scope>
    <scope>SUBSTRATE SPECIFICITY</scope>
    <scope>COFACTOR</scope>
    <source>
        <strain>CBB5</strain>
    </source>
</reference>
<reference key="2">
    <citation type="journal article" date="2011" name="Microbiology">
        <title>Characterization of a broad-specificity non-haem iron N-demethylase from Pseudomonas putida CBB5 capable of utilizing several purine alkaloids as sole carbon and nitrogen source.</title>
        <authorList>
            <person name="Summers R.M."/>
            <person name="Louie T.M."/>
            <person name="Yu C.L."/>
            <person name="Subramanian M."/>
        </authorList>
    </citation>
    <scope>PROTEIN SEQUENCE OF 1-25</scope>
    <scope>FUNCTION</scope>
    <scope>BIOPHYSICOCHEMICAL PROPERTIES</scope>
    <scope>COFACTOR</scope>
    <scope>SUBSTRATE SPECIFICITY</scope>
    <source>
        <strain>CBB5</strain>
    </source>
</reference>
<sequence length="351" mass="40203">MEQAIINDEREYLRHFWHPVCTVTELEKAHPSSLGPLAVKLLNEQLVVAKLGDEYVAMRDRCAHRSAKLSLGTVSGNRLQCPYHGWQYDTHGACQLVPACPNSPIPNKAKVDRFDCEERYGLIWIRLDSSFDCTEIPYFSAANDPRLRIVIQEPYWWDATAERRWENFTDFSHFAFIHPGTLFDPNNAEPPIVPMDRFNGQFRFVYDTPEDMAVPNQAPIGSFSYTCSMPFAINLEVSKYSSSSLHVLFNVSCPVDSHTTKNFLIFAREQSDDSDYLHIAFNDLVFAEDKPVIESQWPKDAPADEVSVVADKVSIQYRKWLRELKEAHKEGSQAFRSALLDPVIESDRSYI</sequence>
<comment type="function">
    <text evidence="2 3">Involved in the caffeine degradation, which is the essential first step for assimilating the carbon and nitrogen in caffeine. Catalyzes the N1-demethylation of caffeine to produce theobromine and formaldehyde. Also catalyzes the N1-demethylation of theophylline, paraxanthine, and 1-methylxanthine to 3-methylxanthine, 7-methylxanthine, and xanthine, respectively. NADH is the preferred substrate.</text>
</comment>
<comment type="catalytic activity">
    <reaction evidence="3">
        <text>caffeine + NADH + O2 + H(+) = theobromine + formaldehyde + NAD(+) + H2O</text>
        <dbReference type="Rhea" id="RHEA:36267"/>
        <dbReference type="ChEBI" id="CHEBI:15377"/>
        <dbReference type="ChEBI" id="CHEBI:15378"/>
        <dbReference type="ChEBI" id="CHEBI:15379"/>
        <dbReference type="ChEBI" id="CHEBI:16842"/>
        <dbReference type="ChEBI" id="CHEBI:27732"/>
        <dbReference type="ChEBI" id="CHEBI:28946"/>
        <dbReference type="ChEBI" id="CHEBI:57540"/>
        <dbReference type="ChEBI" id="CHEBI:57945"/>
        <dbReference type="EC" id="1.14.13.178"/>
    </reaction>
</comment>
<comment type="catalytic activity">
    <reaction evidence="3">
        <text>caffeine + NADPH + O2 + H(+) = theobromine + formaldehyde + NADP(+) + H2O</text>
        <dbReference type="Rhea" id="RHEA:36271"/>
        <dbReference type="ChEBI" id="CHEBI:15377"/>
        <dbReference type="ChEBI" id="CHEBI:15378"/>
        <dbReference type="ChEBI" id="CHEBI:15379"/>
        <dbReference type="ChEBI" id="CHEBI:16842"/>
        <dbReference type="ChEBI" id="CHEBI:27732"/>
        <dbReference type="ChEBI" id="CHEBI:28946"/>
        <dbReference type="ChEBI" id="CHEBI:57783"/>
        <dbReference type="ChEBI" id="CHEBI:58349"/>
        <dbReference type="EC" id="1.14.13.178"/>
    </reaction>
</comment>
<comment type="catalytic activity">
    <reaction evidence="3">
        <text>theophylline + NADH + O2 + H(+) = 3-methylxanthine + formaldehyde + NAD(+) + H2O</text>
        <dbReference type="Rhea" id="RHEA:36279"/>
        <dbReference type="ChEBI" id="CHEBI:15377"/>
        <dbReference type="ChEBI" id="CHEBI:15378"/>
        <dbReference type="ChEBI" id="CHEBI:15379"/>
        <dbReference type="ChEBI" id="CHEBI:16842"/>
        <dbReference type="ChEBI" id="CHEBI:28177"/>
        <dbReference type="ChEBI" id="CHEBI:57540"/>
        <dbReference type="ChEBI" id="CHEBI:57945"/>
        <dbReference type="ChEBI" id="CHEBI:62208"/>
        <dbReference type="EC" id="1.14.13.178"/>
    </reaction>
</comment>
<comment type="catalytic activity">
    <reaction evidence="3">
        <text>theophylline + NADPH + O2 + H(+) = 3-methylxanthine + formaldehyde + NADP(+) + H2O</text>
        <dbReference type="Rhea" id="RHEA:36275"/>
        <dbReference type="ChEBI" id="CHEBI:15377"/>
        <dbReference type="ChEBI" id="CHEBI:15378"/>
        <dbReference type="ChEBI" id="CHEBI:15379"/>
        <dbReference type="ChEBI" id="CHEBI:16842"/>
        <dbReference type="ChEBI" id="CHEBI:28177"/>
        <dbReference type="ChEBI" id="CHEBI:57783"/>
        <dbReference type="ChEBI" id="CHEBI:58349"/>
        <dbReference type="ChEBI" id="CHEBI:62208"/>
        <dbReference type="EC" id="1.14.13.178"/>
    </reaction>
</comment>
<comment type="catalytic activity">
    <reaction evidence="3">
        <text>1,7-dimethylxanthine + NADH + O2 + H(+) = 7-methylxanthine + formaldehyde + NAD(+) + H2O</text>
        <dbReference type="Rhea" id="RHEA:30315"/>
        <dbReference type="ChEBI" id="CHEBI:15377"/>
        <dbReference type="ChEBI" id="CHEBI:15378"/>
        <dbReference type="ChEBI" id="CHEBI:15379"/>
        <dbReference type="ChEBI" id="CHEBI:16842"/>
        <dbReference type="ChEBI" id="CHEBI:25858"/>
        <dbReference type="ChEBI" id="CHEBI:48991"/>
        <dbReference type="ChEBI" id="CHEBI:57540"/>
        <dbReference type="ChEBI" id="CHEBI:57945"/>
        <dbReference type="EC" id="1.14.13.178"/>
    </reaction>
</comment>
<comment type="catalytic activity">
    <reaction evidence="3">
        <text>1,7-dimethylxanthine + NADPH + O2 + H(+) = 7-methylxanthine + formaldehyde + NADP(+) + H2O</text>
        <dbReference type="Rhea" id="RHEA:36283"/>
        <dbReference type="ChEBI" id="CHEBI:15377"/>
        <dbReference type="ChEBI" id="CHEBI:15378"/>
        <dbReference type="ChEBI" id="CHEBI:15379"/>
        <dbReference type="ChEBI" id="CHEBI:16842"/>
        <dbReference type="ChEBI" id="CHEBI:25858"/>
        <dbReference type="ChEBI" id="CHEBI:48991"/>
        <dbReference type="ChEBI" id="CHEBI:57783"/>
        <dbReference type="ChEBI" id="CHEBI:58349"/>
        <dbReference type="EC" id="1.14.13.178"/>
    </reaction>
</comment>
<comment type="cofactor">
    <cofactor evidence="1 2 3">
        <name>[2Fe-2S] cluster</name>
        <dbReference type="ChEBI" id="CHEBI:190135"/>
    </cofactor>
    <text evidence="1 2 3">Binds 1 [2Fe-2S] cluster per subunit.</text>
</comment>
<comment type="biophysicochemical properties">
    <kinetics>
        <KM evidence="2 3">9.1 uM for theophylline (at pH 7.5 and 30 degrees Celsius)</KM>
        <KM evidence="2 3">37 uM for caffeine (at pH 7.5 and 30 degrees Celsius)</KM>
        <KM evidence="2 3">53 uM for paraxanthine (at pH 7.5 and 30 degrees Celsius)</KM>
        <KM evidence="2 3">270 uM for 1-methylxanthine (at pH 7.5 and 30 degrees Celsius)</KM>
        <text>kcat is 190 min(-1) for caffeine (at pH 7.5 and 30 degrees Celsius).</text>
    </kinetics>
    <phDependence>
        <text evidence="2 3">Optimum pH is 7.5.</text>
    </phDependence>
    <temperatureDependence>
        <text evidence="2 3">Optimum temperature is 30 degrees Celsius.</text>
    </temperatureDependence>
</comment>
<comment type="pathway">
    <text>Alkaloid degradation.</text>
</comment>
<dbReference type="EC" id="1.14.13.178"/>
<dbReference type="EMBL" id="JQ061127">
    <property type="protein sequence ID" value="AFD03116.1"/>
    <property type="molecule type" value="Genomic_DNA"/>
</dbReference>
<dbReference type="RefSeq" id="WP_080957099.1">
    <property type="nucleotide sequence ID" value="NZ_JTEN01000129.1"/>
</dbReference>
<dbReference type="PDB" id="6ICK">
    <property type="method" value="X-ray"/>
    <property type="resolution" value="1.95 A"/>
    <property type="chains" value="A/B/C=1-351"/>
</dbReference>
<dbReference type="PDB" id="6ICM">
    <property type="method" value="X-ray"/>
    <property type="resolution" value="2.96 A"/>
    <property type="chains" value="A/B/C=1-351"/>
</dbReference>
<dbReference type="PDB" id="6ICN">
    <property type="method" value="X-ray"/>
    <property type="resolution" value="1.65 A"/>
    <property type="chains" value="A/B/C=1-351"/>
</dbReference>
<dbReference type="PDB" id="6ICO">
    <property type="method" value="X-ray"/>
    <property type="resolution" value="1.85 A"/>
    <property type="chains" value="A/B/C=1-351"/>
</dbReference>
<dbReference type="PDB" id="6ICP">
    <property type="method" value="X-ray"/>
    <property type="resolution" value="2.20 A"/>
    <property type="chains" value="A/B/C=1-351"/>
</dbReference>
<dbReference type="PDB" id="6ICQ">
    <property type="method" value="X-ray"/>
    <property type="resolution" value="1.90 A"/>
    <property type="chains" value="A/B/C=1-351"/>
</dbReference>
<dbReference type="PDBsum" id="6ICK"/>
<dbReference type="PDBsum" id="6ICM"/>
<dbReference type="PDBsum" id="6ICN"/>
<dbReference type="PDBsum" id="6ICO"/>
<dbReference type="PDBsum" id="6ICP"/>
<dbReference type="PDBsum" id="6ICQ"/>
<dbReference type="SASBDB" id="H9N289"/>
<dbReference type="SMR" id="H9N289"/>
<dbReference type="KEGG" id="ag:AFD03116"/>
<dbReference type="BioCyc" id="MetaCyc:MONOMER-17179"/>
<dbReference type="BRENDA" id="1.14.13.128">
    <property type="organism ID" value="5092"/>
</dbReference>
<dbReference type="BRENDA" id="1.14.13.178">
    <property type="organism ID" value="5092"/>
</dbReference>
<dbReference type="GO" id="GO:0051537">
    <property type="term" value="F:2 iron, 2 sulfur cluster binding"/>
    <property type="evidence" value="ECO:0000314"/>
    <property type="project" value="UniProtKB"/>
</dbReference>
<dbReference type="GO" id="GO:0032451">
    <property type="term" value="F:demethylase activity"/>
    <property type="evidence" value="ECO:0000314"/>
    <property type="project" value="UniProtKB"/>
</dbReference>
<dbReference type="GO" id="GO:0046872">
    <property type="term" value="F:metal ion binding"/>
    <property type="evidence" value="ECO:0007669"/>
    <property type="project" value="UniProtKB-KW"/>
</dbReference>
<dbReference type="GO" id="GO:0016491">
    <property type="term" value="F:oxidoreductase activity"/>
    <property type="evidence" value="ECO:0007669"/>
    <property type="project" value="UniProtKB-KW"/>
</dbReference>
<dbReference type="GO" id="GO:0009822">
    <property type="term" value="P:alkaloid catabolic process"/>
    <property type="evidence" value="ECO:0000314"/>
    <property type="project" value="UniProtKB"/>
</dbReference>
<dbReference type="CDD" id="cd03469">
    <property type="entry name" value="Rieske_RO_Alpha_N"/>
    <property type="match status" value="1"/>
</dbReference>
<dbReference type="FunFam" id="2.102.10.10:FF:000044">
    <property type="entry name" value="Methylxanthine N1-demethylase NdmA"/>
    <property type="match status" value="1"/>
</dbReference>
<dbReference type="Gene3D" id="3.90.380.10">
    <property type="entry name" value="Naphthalene 1,2-dioxygenase Alpha Subunit, Chain A, domain 1"/>
    <property type="match status" value="1"/>
</dbReference>
<dbReference type="Gene3D" id="2.102.10.10">
    <property type="entry name" value="Rieske [2Fe-2S] iron-sulphur domain"/>
    <property type="match status" value="1"/>
</dbReference>
<dbReference type="InterPro" id="IPR050584">
    <property type="entry name" value="Cholesterol_7-desaturase"/>
</dbReference>
<dbReference type="InterPro" id="IPR017941">
    <property type="entry name" value="Rieske_2Fe-2S"/>
</dbReference>
<dbReference type="InterPro" id="IPR036922">
    <property type="entry name" value="Rieske_2Fe-2S_sf"/>
</dbReference>
<dbReference type="InterPro" id="IPR044043">
    <property type="entry name" value="VanA_C_cat"/>
</dbReference>
<dbReference type="PANTHER" id="PTHR21266:SF60">
    <property type="entry name" value="3-KETOSTEROID-9-ALPHA-MONOOXYGENASE, OXYGENASE COMPONENT"/>
    <property type="match status" value="1"/>
</dbReference>
<dbReference type="PANTHER" id="PTHR21266">
    <property type="entry name" value="IRON-SULFUR DOMAIN CONTAINING PROTEIN"/>
    <property type="match status" value="1"/>
</dbReference>
<dbReference type="Pfam" id="PF00355">
    <property type="entry name" value="Rieske"/>
    <property type="match status" value="1"/>
</dbReference>
<dbReference type="Pfam" id="PF19112">
    <property type="entry name" value="VanA_C"/>
    <property type="match status" value="1"/>
</dbReference>
<dbReference type="SUPFAM" id="SSF55961">
    <property type="entry name" value="Bet v1-like"/>
    <property type="match status" value="1"/>
</dbReference>
<dbReference type="SUPFAM" id="SSF50022">
    <property type="entry name" value="ISP domain"/>
    <property type="match status" value="1"/>
</dbReference>
<dbReference type="PROSITE" id="PS51296">
    <property type="entry name" value="RIESKE"/>
    <property type="match status" value="1"/>
</dbReference>
<feature type="chain" id="PRO_0000422370" description="Methylxanthine N1-demethylase NdmA">
    <location>
        <begin position="1"/>
        <end position="351"/>
    </location>
</feature>
<feature type="domain" description="Rieske" evidence="1">
    <location>
        <begin position="17"/>
        <end position="125"/>
    </location>
</feature>
<feature type="binding site" evidence="1">
    <location>
        <position position="62"/>
    </location>
    <ligand>
        <name>[2Fe-2S] cluster</name>
        <dbReference type="ChEBI" id="CHEBI:190135"/>
    </ligand>
</feature>
<feature type="binding site" evidence="1">
    <location>
        <position position="64"/>
    </location>
    <ligand>
        <name>[2Fe-2S] cluster</name>
        <dbReference type="ChEBI" id="CHEBI:190135"/>
    </ligand>
</feature>
<feature type="binding site" evidence="1">
    <location>
        <position position="81"/>
    </location>
    <ligand>
        <name>[2Fe-2S] cluster</name>
        <dbReference type="ChEBI" id="CHEBI:190135"/>
    </ligand>
</feature>
<feature type="binding site" evidence="1">
    <location>
        <position position="84"/>
    </location>
    <ligand>
        <name>[2Fe-2S] cluster</name>
        <dbReference type="ChEBI" id="CHEBI:190135"/>
    </ligand>
</feature>
<feature type="helix" evidence="4">
    <location>
        <begin position="8"/>
        <end position="15"/>
    </location>
</feature>
<feature type="strand" evidence="4">
    <location>
        <begin position="16"/>
        <end position="22"/>
    </location>
</feature>
<feature type="helix" evidence="4">
    <location>
        <begin position="23"/>
        <end position="29"/>
    </location>
</feature>
<feature type="strand" evidence="4">
    <location>
        <begin position="37"/>
        <end position="41"/>
    </location>
</feature>
<feature type="strand" evidence="4">
    <location>
        <begin position="44"/>
        <end position="51"/>
    </location>
</feature>
<feature type="strand" evidence="4">
    <location>
        <begin position="54"/>
        <end position="61"/>
    </location>
</feature>
<feature type="turn" evidence="4">
    <location>
        <begin position="63"/>
        <end position="65"/>
    </location>
</feature>
<feature type="helix" evidence="4">
    <location>
        <begin position="69"/>
        <end position="71"/>
    </location>
</feature>
<feature type="strand" evidence="4">
    <location>
        <begin position="72"/>
        <end position="75"/>
    </location>
</feature>
<feature type="strand" evidence="4">
    <location>
        <begin position="78"/>
        <end position="80"/>
    </location>
</feature>
<feature type="turn" evidence="4">
    <location>
        <begin position="82"/>
        <end position="84"/>
    </location>
</feature>
<feature type="strand" evidence="4">
    <location>
        <begin position="92"/>
        <end position="96"/>
    </location>
</feature>
<feature type="strand" evidence="5">
    <location>
        <begin position="100"/>
        <end position="103"/>
    </location>
</feature>
<feature type="strand" evidence="4">
    <location>
        <begin position="113"/>
        <end position="119"/>
    </location>
</feature>
<feature type="strand" evidence="4">
    <location>
        <begin position="122"/>
        <end position="127"/>
    </location>
</feature>
<feature type="turn" evidence="4">
    <location>
        <begin position="140"/>
        <end position="143"/>
    </location>
</feature>
<feature type="strand" evidence="4">
    <location>
        <begin position="148"/>
        <end position="151"/>
    </location>
</feature>
<feature type="strand" evidence="4">
    <location>
        <begin position="155"/>
        <end position="159"/>
    </location>
</feature>
<feature type="helix" evidence="4">
    <location>
        <begin position="161"/>
        <end position="168"/>
    </location>
</feature>
<feature type="strand" evidence="4">
    <location>
        <begin position="171"/>
        <end position="173"/>
    </location>
</feature>
<feature type="helix" evidence="4">
    <location>
        <begin position="174"/>
        <end position="177"/>
    </location>
</feature>
<feature type="turn" evidence="4">
    <location>
        <begin position="179"/>
        <end position="182"/>
    </location>
</feature>
<feature type="turn" evidence="6">
    <location>
        <begin position="185"/>
        <end position="187"/>
    </location>
</feature>
<feature type="strand" evidence="4">
    <location>
        <begin position="196"/>
        <end position="198"/>
    </location>
</feature>
<feature type="strand" evidence="4">
    <location>
        <begin position="201"/>
        <end position="207"/>
    </location>
</feature>
<feature type="strand" evidence="4">
    <location>
        <begin position="221"/>
        <end position="228"/>
    </location>
</feature>
<feature type="turn" evidence="4">
    <location>
        <begin position="229"/>
        <end position="231"/>
    </location>
</feature>
<feature type="strand" evidence="4">
    <location>
        <begin position="232"/>
        <end position="239"/>
    </location>
</feature>
<feature type="turn" evidence="4">
    <location>
        <begin position="240"/>
        <end position="242"/>
    </location>
</feature>
<feature type="strand" evidence="4">
    <location>
        <begin position="245"/>
        <end position="256"/>
    </location>
</feature>
<feature type="strand" evidence="4">
    <location>
        <begin position="259"/>
        <end position="269"/>
    </location>
</feature>
<feature type="helix" evidence="4">
    <location>
        <begin position="275"/>
        <end position="295"/>
    </location>
</feature>
<feature type="strand" evidence="4">
    <location>
        <begin position="297"/>
        <end position="300"/>
    </location>
</feature>
<feature type="helix" evidence="4">
    <location>
        <begin position="309"/>
        <end position="311"/>
    </location>
</feature>
<feature type="helix" evidence="4">
    <location>
        <begin position="312"/>
        <end position="330"/>
    </location>
</feature>
<feature type="helix" evidence="4">
    <location>
        <begin position="332"/>
        <end position="340"/>
    </location>
</feature>